<comment type="function">
    <text evidence="1">One of the primary rRNA binding proteins, it binds directly to 16S rRNA central domain where it helps coordinate assembly of the platform of the 30S subunit.</text>
</comment>
<comment type="subunit">
    <text evidence="1">Part of the 30S ribosomal subunit. Contacts proteins S5 and S12 (By similarity).</text>
</comment>
<comment type="similarity">
    <text evidence="2">Belongs to the universal ribosomal protein uS8 family.</text>
</comment>
<protein>
    <recommendedName>
        <fullName evidence="2">Small ribosomal subunit protein uS8</fullName>
    </recommendedName>
    <alternativeName>
        <fullName>30S ribosomal protein S8</fullName>
    </alternativeName>
</protein>
<organism>
    <name type="scientific">Thermus thermophilus (strain ATCC BAA-163 / DSM 7039 / HB27)</name>
    <dbReference type="NCBI Taxonomy" id="262724"/>
    <lineage>
        <taxon>Bacteria</taxon>
        <taxon>Thermotogati</taxon>
        <taxon>Deinococcota</taxon>
        <taxon>Deinococci</taxon>
        <taxon>Thermales</taxon>
        <taxon>Thermaceae</taxon>
        <taxon>Thermus</taxon>
    </lineage>
</organism>
<keyword id="KW-0002">3D-structure</keyword>
<keyword id="KW-0687">Ribonucleoprotein</keyword>
<keyword id="KW-0689">Ribosomal protein</keyword>
<keyword id="KW-0694">RNA-binding</keyword>
<keyword id="KW-0699">rRNA-binding</keyword>
<gene>
    <name type="primary">rpsH</name>
    <name type="synonym">rps8</name>
    <name type="ordered locus">TT_C1314</name>
</gene>
<feature type="chain" id="PRO_0000126510" description="Small ribosomal subunit protein uS8">
    <location>
        <begin position="1"/>
        <end position="138"/>
    </location>
</feature>
<feature type="helix" evidence="4">
    <location>
        <begin position="5"/>
        <end position="17"/>
    </location>
</feature>
<feature type="turn" evidence="4">
    <location>
        <begin position="18"/>
        <end position="20"/>
    </location>
</feature>
<feature type="strand" evidence="4">
    <location>
        <begin position="22"/>
        <end position="24"/>
    </location>
</feature>
<feature type="helix" evidence="4">
    <location>
        <begin position="30"/>
        <end position="41"/>
    </location>
</feature>
<feature type="strand" evidence="4">
    <location>
        <begin position="44"/>
        <end position="55"/>
    </location>
</feature>
<feature type="strand" evidence="4">
    <location>
        <begin position="57"/>
        <end position="63"/>
    </location>
</feature>
<feature type="strand" evidence="4">
    <location>
        <begin position="71"/>
        <end position="73"/>
    </location>
</feature>
<feature type="strand" evidence="3">
    <location>
        <begin position="78"/>
        <end position="80"/>
    </location>
</feature>
<feature type="strand" evidence="4">
    <location>
        <begin position="82"/>
        <end position="85"/>
    </location>
</feature>
<feature type="strand" evidence="3">
    <location>
        <begin position="89"/>
        <end position="91"/>
    </location>
</feature>
<feature type="helix" evidence="4">
    <location>
        <begin position="97"/>
        <end position="99"/>
    </location>
</feature>
<feature type="helix" evidence="4">
    <location>
        <begin position="103"/>
        <end position="106"/>
    </location>
</feature>
<feature type="strand" evidence="3">
    <location>
        <begin position="108"/>
        <end position="114"/>
    </location>
</feature>
<feature type="strand" evidence="3">
    <location>
        <begin position="117"/>
        <end position="119"/>
    </location>
</feature>
<feature type="helix" evidence="4">
    <location>
        <begin position="121"/>
        <end position="127"/>
    </location>
</feature>
<feature type="strand" evidence="4">
    <location>
        <begin position="131"/>
        <end position="133"/>
    </location>
</feature>
<feature type="strand" evidence="4">
    <location>
        <begin position="135"/>
        <end position="138"/>
    </location>
</feature>
<proteinExistence type="evidence at protein level"/>
<sequence>MLTDPIADMLTRIRNATRVYKESTDVPASRFKEEILRILAREGFIKGYERVDVDGKPYLRVYLKYGPRRQGPDPRPEQVIHHIRRISKPGRRVYVGVKEIPRVRRGLGIAILSTSKGVLTDREARKLGVGGELICEVW</sequence>
<name>RS8_THET2</name>
<evidence type="ECO:0000250" key="1"/>
<evidence type="ECO:0000305" key="2"/>
<evidence type="ECO:0007829" key="3">
    <source>
        <dbReference type="PDB" id="4V63"/>
    </source>
</evidence>
<evidence type="ECO:0007829" key="4">
    <source>
        <dbReference type="PDB" id="4V67"/>
    </source>
</evidence>
<dbReference type="EMBL" id="AE017221">
    <property type="protein sequence ID" value="AAS81656.1"/>
    <property type="molecule type" value="Genomic_DNA"/>
</dbReference>
<dbReference type="RefSeq" id="WP_011173705.1">
    <property type="nucleotide sequence ID" value="NC_005835.1"/>
</dbReference>
<dbReference type="PDB" id="4KVB">
    <property type="method" value="X-ray"/>
    <property type="resolution" value="4.20 A"/>
    <property type="chains" value="H=1-138"/>
</dbReference>
<dbReference type="PDB" id="4V4I">
    <property type="method" value="X-ray"/>
    <property type="resolution" value="3.71 A"/>
    <property type="chains" value="i=1-138"/>
</dbReference>
<dbReference type="PDB" id="4V4J">
    <property type="method" value="X-ray"/>
    <property type="resolution" value="3.83 A"/>
    <property type="chains" value="i=1-138"/>
</dbReference>
<dbReference type="PDB" id="4V63">
    <property type="method" value="X-ray"/>
    <property type="resolution" value="3.21 A"/>
    <property type="chains" value="AH/CH=1-138"/>
</dbReference>
<dbReference type="PDB" id="4V67">
    <property type="method" value="X-ray"/>
    <property type="resolution" value="3.00 A"/>
    <property type="chains" value="AH/CH=1-138"/>
</dbReference>
<dbReference type="PDB" id="4V7P">
    <property type="method" value="X-ray"/>
    <property type="resolution" value="3.62 A"/>
    <property type="chains" value="AH/DH=1-138"/>
</dbReference>
<dbReference type="PDB" id="4V83">
    <property type="method" value="X-ray"/>
    <property type="resolution" value="3.50 A"/>
    <property type="chains" value="AH/CH=1-138"/>
</dbReference>
<dbReference type="PDB" id="4V84">
    <property type="method" value="X-ray"/>
    <property type="resolution" value="3.40 A"/>
    <property type="chains" value="AH/CH=1-138"/>
</dbReference>
<dbReference type="PDB" id="4V9J">
    <property type="method" value="X-ray"/>
    <property type="resolution" value="3.86 A"/>
    <property type="chains" value="AH/CH=1-138"/>
</dbReference>
<dbReference type="PDB" id="4V9K">
    <property type="method" value="X-ray"/>
    <property type="resolution" value="3.50 A"/>
    <property type="chains" value="AH/CH=1-138"/>
</dbReference>
<dbReference type="PDB" id="4V9L">
    <property type="method" value="X-ray"/>
    <property type="resolution" value="3.50 A"/>
    <property type="chains" value="AH/CH=1-138"/>
</dbReference>
<dbReference type="PDB" id="4V9M">
    <property type="method" value="X-ray"/>
    <property type="resolution" value="4.00 A"/>
    <property type="chains" value="AH/CH=1-138"/>
</dbReference>
<dbReference type="PDB" id="4V9N">
    <property type="method" value="X-ray"/>
    <property type="resolution" value="3.40 A"/>
    <property type="chains" value="AH/CH=1-138"/>
</dbReference>
<dbReference type="PDB" id="4V9Q">
    <property type="method" value="X-ray"/>
    <property type="resolution" value="3.40 A"/>
    <property type="chains" value="BH/DH=1-138"/>
</dbReference>
<dbReference type="PDB" id="4W29">
    <property type="method" value="X-ray"/>
    <property type="resolution" value="3.80 A"/>
    <property type="chains" value="AH/CH=1-138"/>
</dbReference>
<dbReference type="PDB" id="4XEJ">
    <property type="method" value="X-ray"/>
    <property type="resolution" value="3.80 A"/>
    <property type="chains" value="AS08/BS08=1-138"/>
</dbReference>
<dbReference type="PDB" id="5J4D">
    <property type="method" value="X-ray"/>
    <property type="resolution" value="3.10 A"/>
    <property type="chains" value="QA/VC=1-138"/>
</dbReference>
<dbReference type="PDB" id="5V8I">
    <property type="method" value="X-ray"/>
    <property type="resolution" value="3.25 A"/>
    <property type="chains" value="1h/2h=1-138"/>
</dbReference>
<dbReference type="PDB" id="6B4V">
    <property type="method" value="X-ray"/>
    <property type="resolution" value="3.40 A"/>
    <property type="chains" value="QA/UC=1-138"/>
</dbReference>
<dbReference type="PDB" id="6BOH">
    <property type="method" value="X-ray"/>
    <property type="resolution" value="3.40 A"/>
    <property type="chains" value="RA/WC=1-138"/>
</dbReference>
<dbReference type="PDB" id="6BOK">
    <property type="method" value="X-ray"/>
    <property type="resolution" value="3.55 A"/>
    <property type="chains" value="PA/SC=1-138"/>
</dbReference>
<dbReference type="PDB" id="6N1D">
    <property type="method" value="X-ray"/>
    <property type="resolution" value="3.20 A"/>
    <property type="chains" value="AS08/BS08=1-138"/>
</dbReference>
<dbReference type="PDBsum" id="4KVB"/>
<dbReference type="PDBsum" id="4V4I"/>
<dbReference type="PDBsum" id="4V4J"/>
<dbReference type="PDBsum" id="4V63"/>
<dbReference type="PDBsum" id="4V67"/>
<dbReference type="PDBsum" id="4V7P"/>
<dbReference type="PDBsum" id="4V83"/>
<dbReference type="PDBsum" id="4V84"/>
<dbReference type="PDBsum" id="4V9J"/>
<dbReference type="PDBsum" id="4V9K"/>
<dbReference type="PDBsum" id="4V9L"/>
<dbReference type="PDBsum" id="4V9M"/>
<dbReference type="PDBsum" id="4V9N"/>
<dbReference type="PDBsum" id="4V9Q"/>
<dbReference type="PDBsum" id="4W29"/>
<dbReference type="PDBsum" id="4XEJ"/>
<dbReference type="PDBsum" id="5J4D"/>
<dbReference type="PDBsum" id="5V8I"/>
<dbReference type="PDBsum" id="6B4V"/>
<dbReference type="PDBsum" id="6BOH"/>
<dbReference type="PDBsum" id="6BOK"/>
<dbReference type="PDBsum" id="6N1D"/>
<dbReference type="SMR" id="P62668"/>
<dbReference type="IntAct" id="P62668">
    <property type="interactions" value="4"/>
</dbReference>
<dbReference type="GeneID" id="3169811"/>
<dbReference type="KEGG" id="tth:TT_C1314"/>
<dbReference type="eggNOG" id="COG0096">
    <property type="taxonomic scope" value="Bacteria"/>
</dbReference>
<dbReference type="HOGENOM" id="CLU_098428_0_2_0"/>
<dbReference type="OrthoDB" id="9802617at2"/>
<dbReference type="EvolutionaryTrace" id="P62668"/>
<dbReference type="Proteomes" id="UP000000592">
    <property type="component" value="Chromosome"/>
</dbReference>
<dbReference type="GO" id="GO:1990904">
    <property type="term" value="C:ribonucleoprotein complex"/>
    <property type="evidence" value="ECO:0007669"/>
    <property type="project" value="UniProtKB-KW"/>
</dbReference>
<dbReference type="GO" id="GO:0005840">
    <property type="term" value="C:ribosome"/>
    <property type="evidence" value="ECO:0007669"/>
    <property type="project" value="UniProtKB-KW"/>
</dbReference>
<dbReference type="GO" id="GO:0019843">
    <property type="term" value="F:rRNA binding"/>
    <property type="evidence" value="ECO:0007669"/>
    <property type="project" value="UniProtKB-UniRule"/>
</dbReference>
<dbReference type="GO" id="GO:0003735">
    <property type="term" value="F:structural constituent of ribosome"/>
    <property type="evidence" value="ECO:0007669"/>
    <property type="project" value="InterPro"/>
</dbReference>
<dbReference type="GO" id="GO:0006412">
    <property type="term" value="P:translation"/>
    <property type="evidence" value="ECO:0007669"/>
    <property type="project" value="UniProtKB-UniRule"/>
</dbReference>
<dbReference type="FunFam" id="3.30.1370.30:FF:000002">
    <property type="entry name" value="30S ribosomal protein S8"/>
    <property type="match status" value="1"/>
</dbReference>
<dbReference type="FunFam" id="3.30.1490.10:FF:000001">
    <property type="entry name" value="30S ribosomal protein S8"/>
    <property type="match status" value="1"/>
</dbReference>
<dbReference type="Gene3D" id="3.30.1370.30">
    <property type="match status" value="1"/>
</dbReference>
<dbReference type="Gene3D" id="3.30.1490.10">
    <property type="match status" value="1"/>
</dbReference>
<dbReference type="HAMAP" id="MF_01302_B">
    <property type="entry name" value="Ribosomal_uS8_B"/>
    <property type="match status" value="1"/>
</dbReference>
<dbReference type="InterPro" id="IPR000630">
    <property type="entry name" value="Ribosomal_uS8"/>
</dbReference>
<dbReference type="InterPro" id="IPR047863">
    <property type="entry name" value="Ribosomal_uS8_CS"/>
</dbReference>
<dbReference type="InterPro" id="IPR035987">
    <property type="entry name" value="Ribosomal_uS8_sf"/>
</dbReference>
<dbReference type="NCBIfam" id="NF001109">
    <property type="entry name" value="PRK00136.1"/>
    <property type="match status" value="1"/>
</dbReference>
<dbReference type="PANTHER" id="PTHR11758">
    <property type="entry name" value="40S RIBOSOMAL PROTEIN S15A"/>
    <property type="match status" value="1"/>
</dbReference>
<dbReference type="Pfam" id="PF00410">
    <property type="entry name" value="Ribosomal_S8"/>
    <property type="match status" value="1"/>
</dbReference>
<dbReference type="SUPFAM" id="SSF56047">
    <property type="entry name" value="Ribosomal protein S8"/>
    <property type="match status" value="1"/>
</dbReference>
<dbReference type="PROSITE" id="PS00053">
    <property type="entry name" value="RIBOSOMAL_S8"/>
    <property type="match status" value="1"/>
</dbReference>
<accession>P62668</accession>
<reference key="1">
    <citation type="journal article" date="2004" name="Nat. Biotechnol.">
        <title>The genome sequence of the extreme thermophile Thermus thermophilus.</title>
        <authorList>
            <person name="Henne A."/>
            <person name="Brueggemann H."/>
            <person name="Raasch C."/>
            <person name="Wiezer A."/>
            <person name="Hartsch T."/>
            <person name="Liesegang H."/>
            <person name="Johann A."/>
            <person name="Lienard T."/>
            <person name="Gohl O."/>
            <person name="Martinez-Arias R."/>
            <person name="Jacobi C."/>
            <person name="Starkuviene V."/>
            <person name="Schlenczeck S."/>
            <person name="Dencker S."/>
            <person name="Huber R."/>
            <person name="Klenk H.-P."/>
            <person name="Kramer W."/>
            <person name="Merkl R."/>
            <person name="Gottschalk G."/>
            <person name="Fritz H.-J."/>
        </authorList>
    </citation>
    <scope>NUCLEOTIDE SEQUENCE [LARGE SCALE GENOMIC DNA]</scope>
    <source>
        <strain>ATCC BAA-163 / DSM 7039 / HB27</strain>
    </source>
</reference>